<gene>
    <name evidence="1" type="primary">trpC</name>
    <name type="ordered locus">ABC1897</name>
</gene>
<name>TRPC_SHOC1</name>
<evidence type="ECO:0000255" key="1">
    <source>
        <dbReference type="HAMAP-Rule" id="MF_00134"/>
    </source>
</evidence>
<accession>Q5WGS3</accession>
<keyword id="KW-0028">Amino-acid biosynthesis</keyword>
<keyword id="KW-0057">Aromatic amino acid biosynthesis</keyword>
<keyword id="KW-0210">Decarboxylase</keyword>
<keyword id="KW-0456">Lyase</keyword>
<keyword id="KW-1185">Reference proteome</keyword>
<keyword id="KW-0822">Tryptophan biosynthesis</keyword>
<comment type="catalytic activity">
    <reaction evidence="1">
        <text>1-(2-carboxyphenylamino)-1-deoxy-D-ribulose 5-phosphate + H(+) = (1S,2R)-1-C-(indol-3-yl)glycerol 3-phosphate + CO2 + H2O</text>
        <dbReference type="Rhea" id="RHEA:23476"/>
        <dbReference type="ChEBI" id="CHEBI:15377"/>
        <dbReference type="ChEBI" id="CHEBI:15378"/>
        <dbReference type="ChEBI" id="CHEBI:16526"/>
        <dbReference type="ChEBI" id="CHEBI:58613"/>
        <dbReference type="ChEBI" id="CHEBI:58866"/>
        <dbReference type="EC" id="4.1.1.48"/>
    </reaction>
</comment>
<comment type="pathway">
    <text evidence="1">Amino-acid biosynthesis; L-tryptophan biosynthesis; L-tryptophan from chorismate: step 4/5.</text>
</comment>
<comment type="similarity">
    <text evidence="1">Belongs to the TrpC family.</text>
</comment>
<protein>
    <recommendedName>
        <fullName evidence="1">Indole-3-glycerol phosphate synthase</fullName>
        <shortName evidence="1">IGPS</shortName>
        <ecNumber evidence="1">4.1.1.48</ecNumber>
    </recommendedName>
</protein>
<proteinExistence type="inferred from homology"/>
<dbReference type="EC" id="4.1.1.48" evidence="1"/>
<dbReference type="EMBL" id="AP006627">
    <property type="protein sequence ID" value="BAD64432.1"/>
    <property type="molecule type" value="Genomic_DNA"/>
</dbReference>
<dbReference type="RefSeq" id="WP_011246740.1">
    <property type="nucleotide sequence ID" value="NC_006582.1"/>
</dbReference>
<dbReference type="SMR" id="Q5WGS3"/>
<dbReference type="STRING" id="66692.ABC1897"/>
<dbReference type="KEGG" id="bcl:ABC1897"/>
<dbReference type="eggNOG" id="COG0134">
    <property type="taxonomic scope" value="Bacteria"/>
</dbReference>
<dbReference type="HOGENOM" id="CLU_034247_2_1_9"/>
<dbReference type="OrthoDB" id="9804217at2"/>
<dbReference type="UniPathway" id="UPA00035">
    <property type="reaction ID" value="UER00043"/>
</dbReference>
<dbReference type="Proteomes" id="UP000001168">
    <property type="component" value="Chromosome"/>
</dbReference>
<dbReference type="GO" id="GO:0004425">
    <property type="term" value="F:indole-3-glycerol-phosphate synthase activity"/>
    <property type="evidence" value="ECO:0007669"/>
    <property type="project" value="UniProtKB-UniRule"/>
</dbReference>
<dbReference type="GO" id="GO:0004640">
    <property type="term" value="F:phosphoribosylanthranilate isomerase activity"/>
    <property type="evidence" value="ECO:0007669"/>
    <property type="project" value="TreeGrafter"/>
</dbReference>
<dbReference type="GO" id="GO:0000162">
    <property type="term" value="P:L-tryptophan biosynthetic process"/>
    <property type="evidence" value="ECO:0007669"/>
    <property type="project" value="UniProtKB-UniRule"/>
</dbReference>
<dbReference type="CDD" id="cd00331">
    <property type="entry name" value="IGPS"/>
    <property type="match status" value="1"/>
</dbReference>
<dbReference type="FunFam" id="3.20.20.70:FF:000024">
    <property type="entry name" value="Indole-3-glycerol phosphate synthase"/>
    <property type="match status" value="1"/>
</dbReference>
<dbReference type="Gene3D" id="3.20.20.70">
    <property type="entry name" value="Aldolase class I"/>
    <property type="match status" value="1"/>
</dbReference>
<dbReference type="HAMAP" id="MF_00134_B">
    <property type="entry name" value="IGPS_B"/>
    <property type="match status" value="1"/>
</dbReference>
<dbReference type="InterPro" id="IPR013785">
    <property type="entry name" value="Aldolase_TIM"/>
</dbReference>
<dbReference type="InterPro" id="IPR045186">
    <property type="entry name" value="Indole-3-glycerol_P_synth"/>
</dbReference>
<dbReference type="InterPro" id="IPR013798">
    <property type="entry name" value="Indole-3-glycerol_P_synth_dom"/>
</dbReference>
<dbReference type="InterPro" id="IPR001468">
    <property type="entry name" value="Indole-3-GlycerolPSynthase_CS"/>
</dbReference>
<dbReference type="InterPro" id="IPR011060">
    <property type="entry name" value="RibuloseP-bd_barrel"/>
</dbReference>
<dbReference type="NCBIfam" id="NF001375">
    <property type="entry name" value="PRK00278.2-2"/>
    <property type="match status" value="1"/>
</dbReference>
<dbReference type="NCBIfam" id="NF001377">
    <property type="entry name" value="PRK00278.2-4"/>
    <property type="match status" value="1"/>
</dbReference>
<dbReference type="PANTHER" id="PTHR22854:SF2">
    <property type="entry name" value="INDOLE-3-GLYCEROL-PHOSPHATE SYNTHASE"/>
    <property type="match status" value="1"/>
</dbReference>
<dbReference type="PANTHER" id="PTHR22854">
    <property type="entry name" value="TRYPTOPHAN BIOSYNTHESIS PROTEIN"/>
    <property type="match status" value="1"/>
</dbReference>
<dbReference type="Pfam" id="PF00218">
    <property type="entry name" value="IGPS"/>
    <property type="match status" value="1"/>
</dbReference>
<dbReference type="SUPFAM" id="SSF51366">
    <property type="entry name" value="Ribulose-phoshate binding barrel"/>
    <property type="match status" value="1"/>
</dbReference>
<dbReference type="PROSITE" id="PS00614">
    <property type="entry name" value="IGPS"/>
    <property type="match status" value="1"/>
</dbReference>
<feature type="chain" id="PRO_1000018441" description="Indole-3-glycerol phosphate synthase">
    <location>
        <begin position="1"/>
        <end position="255"/>
    </location>
</feature>
<sequence>MLEKILATKREEISQLQLPEKQYFPKKSLKASLQKTSLPLGLIAEIKQASPSKGVLCETISPTAIARVYEEGGASAISVLTDRTYFQGDTAYVAEVKKTVSLPVLRKDFILSPLQVEETACIGADAMLLIAGAMEAKQLHELYELAYSKGLECLVEVHSEEELESLLAVFTPEVIGINNRNLKTFQTSVSQTEQIAKMVPKEALLVSESGIHTPDDIARVKKAGANAVLIGEQLMRKDDKRQAIIDLFSESAINQ</sequence>
<reference key="1">
    <citation type="submission" date="2003-10" db="EMBL/GenBank/DDBJ databases">
        <title>The complete genome sequence of the alkaliphilic Bacillus clausii KSM-K16.</title>
        <authorList>
            <person name="Takaki Y."/>
            <person name="Kageyama Y."/>
            <person name="Shimamura S."/>
            <person name="Suzuki H."/>
            <person name="Nishi S."/>
            <person name="Hatada Y."/>
            <person name="Kawai S."/>
            <person name="Ito S."/>
            <person name="Horikoshi K."/>
        </authorList>
    </citation>
    <scope>NUCLEOTIDE SEQUENCE [LARGE SCALE GENOMIC DNA]</scope>
    <source>
        <strain>KSM-K16</strain>
    </source>
</reference>
<organism>
    <name type="scientific">Shouchella clausii (strain KSM-K16)</name>
    <name type="common">Alkalihalobacillus clausii</name>
    <dbReference type="NCBI Taxonomy" id="66692"/>
    <lineage>
        <taxon>Bacteria</taxon>
        <taxon>Bacillati</taxon>
        <taxon>Bacillota</taxon>
        <taxon>Bacilli</taxon>
        <taxon>Bacillales</taxon>
        <taxon>Bacillaceae</taxon>
        <taxon>Shouchella</taxon>
    </lineage>
</organism>